<keyword id="KW-0328">Glycosyltransferase</keyword>
<keyword id="KW-0479">Metal-binding</keyword>
<keyword id="KW-0671">Queuosine biosynthesis</keyword>
<keyword id="KW-1185">Reference proteome</keyword>
<keyword id="KW-0808">Transferase</keyword>
<keyword id="KW-0819">tRNA processing</keyword>
<keyword id="KW-0862">Zinc</keyword>
<accession>Q892A0</accession>
<name>TGT_CLOTE</name>
<protein>
    <recommendedName>
        <fullName evidence="1">Queuine tRNA-ribosyltransferase</fullName>
        <ecNumber evidence="1">2.4.2.29</ecNumber>
    </recommendedName>
    <alternativeName>
        <fullName evidence="1">Guanine insertion enzyme</fullName>
    </alternativeName>
    <alternativeName>
        <fullName evidence="1">tRNA-guanine transglycosylase</fullName>
    </alternativeName>
</protein>
<sequence length="376" mass="42835">MYTLIKKCGNAKRGRFETPHGTIETPVFMNVGTLGVIKGAVSSMDLKEIGCQVELSNTYHLHLRPGDEVIKKMGGLHKFMNWDRPILTDSGGFQVFSLAKIRKIQEEGVYFNSHIDGRRIFMGPEESMRIQSNIASTIAMAFDECIPNPSTREYVENSVARTTRWLERCKKEMDRLNSLPDTINKKQMLFGINQGGTYEDIRKAHAKTIVDMDLDGYAIGGLAVGETHEEMYRVIDEVAPIFPDNKPLYLMGVGLPSNILEAVDRGVDFFDCVLPARNGRHGHVFTKYGKINLMNAKFELDGNPIDEGCECPACKHYSRAYIRHLFKAKEMLAMRLCVLHNLYFYNKLMEDIRKAIEGDYFKEFKEEKLHNWSGKA</sequence>
<comment type="function">
    <text evidence="1">Catalyzes the base-exchange of a guanine (G) residue with the queuine precursor 7-aminomethyl-7-deazaguanine (PreQ1) at position 34 (anticodon wobble position) in tRNAs with GU(N) anticodons (tRNA-Asp, -Asn, -His and -Tyr). Catalysis occurs through a double-displacement mechanism. The nucleophile active site attacks the C1' of nucleotide 34 to detach the guanine base from the RNA, forming a covalent enzyme-RNA intermediate. The proton acceptor active site deprotonates the incoming PreQ1, allowing a nucleophilic attack on the C1' of the ribose to form the product. After dissociation, two additional enzymatic reactions on the tRNA convert PreQ1 to queuine (Q), resulting in the hypermodified nucleoside queuosine (7-(((4,5-cis-dihydroxy-2-cyclopenten-1-yl)amino)methyl)-7-deazaguanosine).</text>
</comment>
<comment type="catalytic activity">
    <reaction evidence="1">
        <text>7-aminomethyl-7-carbaguanine + guanosine(34) in tRNA = 7-aminomethyl-7-carbaguanosine(34) in tRNA + guanine</text>
        <dbReference type="Rhea" id="RHEA:24104"/>
        <dbReference type="Rhea" id="RHEA-COMP:10341"/>
        <dbReference type="Rhea" id="RHEA-COMP:10342"/>
        <dbReference type="ChEBI" id="CHEBI:16235"/>
        <dbReference type="ChEBI" id="CHEBI:58703"/>
        <dbReference type="ChEBI" id="CHEBI:74269"/>
        <dbReference type="ChEBI" id="CHEBI:82833"/>
        <dbReference type="EC" id="2.4.2.29"/>
    </reaction>
</comment>
<comment type="cofactor">
    <cofactor evidence="1">
        <name>Zn(2+)</name>
        <dbReference type="ChEBI" id="CHEBI:29105"/>
    </cofactor>
    <text evidence="1">Binds 1 zinc ion per subunit.</text>
</comment>
<comment type="pathway">
    <text evidence="1">tRNA modification; tRNA-queuosine biosynthesis.</text>
</comment>
<comment type="subunit">
    <text evidence="1">Homodimer. Within each dimer, one monomer is responsible for RNA recognition and catalysis, while the other monomer binds to the replacement base PreQ1.</text>
</comment>
<comment type="similarity">
    <text evidence="1">Belongs to the queuine tRNA-ribosyltransferase family.</text>
</comment>
<gene>
    <name evidence="1" type="primary">tgt</name>
    <name type="ordered locus">CTC_02209</name>
</gene>
<proteinExistence type="inferred from homology"/>
<evidence type="ECO:0000255" key="1">
    <source>
        <dbReference type="HAMAP-Rule" id="MF_00168"/>
    </source>
</evidence>
<organism>
    <name type="scientific">Clostridium tetani (strain Massachusetts / E88)</name>
    <dbReference type="NCBI Taxonomy" id="212717"/>
    <lineage>
        <taxon>Bacteria</taxon>
        <taxon>Bacillati</taxon>
        <taxon>Bacillota</taxon>
        <taxon>Clostridia</taxon>
        <taxon>Eubacteriales</taxon>
        <taxon>Clostridiaceae</taxon>
        <taxon>Clostridium</taxon>
    </lineage>
</organism>
<feature type="chain" id="PRO_0000135469" description="Queuine tRNA-ribosyltransferase">
    <location>
        <begin position="1"/>
        <end position="376"/>
    </location>
</feature>
<feature type="region of interest" description="RNA binding" evidence="1">
    <location>
        <begin position="252"/>
        <end position="258"/>
    </location>
</feature>
<feature type="region of interest" description="RNA binding; important for wobble base 34 recognition" evidence="1">
    <location>
        <begin position="276"/>
        <end position="280"/>
    </location>
</feature>
<feature type="active site" description="Proton acceptor" evidence="1">
    <location>
        <position position="89"/>
    </location>
</feature>
<feature type="active site" description="Nucleophile" evidence="1">
    <location>
        <position position="271"/>
    </location>
</feature>
<feature type="binding site" evidence="1">
    <location>
        <begin position="89"/>
        <end position="93"/>
    </location>
    <ligand>
        <name>substrate</name>
    </ligand>
</feature>
<feature type="binding site" evidence="1">
    <location>
        <position position="143"/>
    </location>
    <ligand>
        <name>substrate</name>
    </ligand>
</feature>
<feature type="binding site" evidence="1">
    <location>
        <position position="194"/>
    </location>
    <ligand>
        <name>substrate</name>
    </ligand>
</feature>
<feature type="binding site" evidence="1">
    <location>
        <position position="221"/>
    </location>
    <ligand>
        <name>substrate</name>
    </ligand>
</feature>
<feature type="binding site" evidence="1">
    <location>
        <position position="309"/>
    </location>
    <ligand>
        <name>Zn(2+)</name>
        <dbReference type="ChEBI" id="CHEBI:29105"/>
    </ligand>
</feature>
<feature type="binding site" evidence="1">
    <location>
        <position position="311"/>
    </location>
    <ligand>
        <name>Zn(2+)</name>
        <dbReference type="ChEBI" id="CHEBI:29105"/>
    </ligand>
</feature>
<feature type="binding site" evidence="1">
    <location>
        <position position="314"/>
    </location>
    <ligand>
        <name>Zn(2+)</name>
        <dbReference type="ChEBI" id="CHEBI:29105"/>
    </ligand>
</feature>
<feature type="binding site" evidence="1">
    <location>
        <position position="340"/>
    </location>
    <ligand>
        <name>Zn(2+)</name>
        <dbReference type="ChEBI" id="CHEBI:29105"/>
    </ligand>
</feature>
<dbReference type="EC" id="2.4.2.29" evidence="1"/>
<dbReference type="EMBL" id="AE015927">
    <property type="protein sequence ID" value="AAO36695.1"/>
    <property type="molecule type" value="Genomic_DNA"/>
</dbReference>
<dbReference type="RefSeq" id="WP_011100356.1">
    <property type="nucleotide sequence ID" value="NC_004557.1"/>
</dbReference>
<dbReference type="SMR" id="Q892A0"/>
<dbReference type="STRING" id="212717.CTC_02209"/>
<dbReference type="GeneID" id="24252777"/>
<dbReference type="KEGG" id="ctc:CTC_02209"/>
<dbReference type="HOGENOM" id="CLU_022060_0_1_9"/>
<dbReference type="OrthoDB" id="9805417at2"/>
<dbReference type="UniPathway" id="UPA00392"/>
<dbReference type="Proteomes" id="UP000001412">
    <property type="component" value="Chromosome"/>
</dbReference>
<dbReference type="GO" id="GO:0005829">
    <property type="term" value="C:cytosol"/>
    <property type="evidence" value="ECO:0007669"/>
    <property type="project" value="TreeGrafter"/>
</dbReference>
<dbReference type="GO" id="GO:0046872">
    <property type="term" value="F:metal ion binding"/>
    <property type="evidence" value="ECO:0007669"/>
    <property type="project" value="UniProtKB-KW"/>
</dbReference>
<dbReference type="GO" id="GO:0008479">
    <property type="term" value="F:tRNA-guanosine(34) queuine transglycosylase activity"/>
    <property type="evidence" value="ECO:0007669"/>
    <property type="project" value="UniProtKB-UniRule"/>
</dbReference>
<dbReference type="GO" id="GO:0008616">
    <property type="term" value="P:queuosine biosynthetic process"/>
    <property type="evidence" value="ECO:0007669"/>
    <property type="project" value="UniProtKB-UniRule"/>
</dbReference>
<dbReference type="GO" id="GO:0002099">
    <property type="term" value="P:tRNA wobble guanine modification"/>
    <property type="evidence" value="ECO:0007669"/>
    <property type="project" value="TreeGrafter"/>
</dbReference>
<dbReference type="GO" id="GO:0101030">
    <property type="term" value="P:tRNA-guanine transglycosylation"/>
    <property type="evidence" value="ECO:0007669"/>
    <property type="project" value="InterPro"/>
</dbReference>
<dbReference type="FunFam" id="3.20.20.105:FF:000001">
    <property type="entry name" value="Queuine tRNA-ribosyltransferase"/>
    <property type="match status" value="1"/>
</dbReference>
<dbReference type="Gene3D" id="3.20.20.105">
    <property type="entry name" value="Queuine tRNA-ribosyltransferase-like"/>
    <property type="match status" value="1"/>
</dbReference>
<dbReference type="HAMAP" id="MF_00168">
    <property type="entry name" value="Q_tRNA_Tgt"/>
    <property type="match status" value="1"/>
</dbReference>
<dbReference type="InterPro" id="IPR050076">
    <property type="entry name" value="ArchSynthase1/Queuine_TRR"/>
</dbReference>
<dbReference type="InterPro" id="IPR004803">
    <property type="entry name" value="TGT"/>
</dbReference>
<dbReference type="InterPro" id="IPR036511">
    <property type="entry name" value="TGT-like_sf"/>
</dbReference>
<dbReference type="InterPro" id="IPR002616">
    <property type="entry name" value="tRNA_ribo_trans-like"/>
</dbReference>
<dbReference type="NCBIfam" id="TIGR00430">
    <property type="entry name" value="Q_tRNA_tgt"/>
    <property type="match status" value="1"/>
</dbReference>
<dbReference type="NCBIfam" id="TIGR00449">
    <property type="entry name" value="tgt_general"/>
    <property type="match status" value="1"/>
</dbReference>
<dbReference type="PANTHER" id="PTHR46499">
    <property type="entry name" value="QUEUINE TRNA-RIBOSYLTRANSFERASE"/>
    <property type="match status" value="1"/>
</dbReference>
<dbReference type="PANTHER" id="PTHR46499:SF1">
    <property type="entry name" value="QUEUINE TRNA-RIBOSYLTRANSFERASE"/>
    <property type="match status" value="1"/>
</dbReference>
<dbReference type="Pfam" id="PF01702">
    <property type="entry name" value="TGT"/>
    <property type="match status" value="1"/>
</dbReference>
<dbReference type="SUPFAM" id="SSF51713">
    <property type="entry name" value="tRNA-guanine transglycosylase"/>
    <property type="match status" value="1"/>
</dbReference>
<reference key="1">
    <citation type="journal article" date="2003" name="Proc. Natl. Acad. Sci. U.S.A.">
        <title>The genome sequence of Clostridium tetani, the causative agent of tetanus disease.</title>
        <authorList>
            <person name="Brueggemann H."/>
            <person name="Baeumer S."/>
            <person name="Fricke W.F."/>
            <person name="Wiezer A."/>
            <person name="Liesegang H."/>
            <person name="Decker I."/>
            <person name="Herzberg C."/>
            <person name="Martinez-Arias R."/>
            <person name="Merkl R."/>
            <person name="Henne A."/>
            <person name="Gottschalk G."/>
        </authorList>
    </citation>
    <scope>NUCLEOTIDE SEQUENCE [LARGE SCALE GENOMIC DNA]</scope>
    <source>
        <strain>Massachusetts / E88</strain>
    </source>
</reference>